<dbReference type="EMBL" id="DS237860">
    <property type="protein sequence ID" value="EDP37968.1"/>
    <property type="molecule type" value="Genomic_DNA"/>
</dbReference>
<dbReference type="RefSeq" id="XP_001893193.1">
    <property type="nucleotide sequence ID" value="XM_001893158.1"/>
</dbReference>
<dbReference type="SMR" id="A8NS61"/>
<dbReference type="FunCoup" id="A8NS61">
    <property type="interactions" value="1960"/>
</dbReference>
<dbReference type="STRING" id="6279.A8NS61"/>
<dbReference type="GeneID" id="6096656"/>
<dbReference type="KEGG" id="bmy:BM_BM13664"/>
<dbReference type="CTD" id="6096656"/>
<dbReference type="WormBase" id="Bm13664">
    <property type="protein sequence ID" value="BM30815"/>
    <property type="gene ID" value="WBGene00233925"/>
    <property type="gene designation" value="Bma-eif-3.G"/>
</dbReference>
<dbReference type="InParanoid" id="A8NS61"/>
<dbReference type="OrthoDB" id="2011769at2759"/>
<dbReference type="Proteomes" id="UP000006672">
    <property type="component" value="Unassembled WGS sequence"/>
</dbReference>
<dbReference type="GO" id="GO:0016282">
    <property type="term" value="C:eukaryotic 43S preinitiation complex"/>
    <property type="evidence" value="ECO:0007669"/>
    <property type="project" value="UniProtKB-UniRule"/>
</dbReference>
<dbReference type="GO" id="GO:0033290">
    <property type="term" value="C:eukaryotic 48S preinitiation complex"/>
    <property type="evidence" value="ECO:0007669"/>
    <property type="project" value="UniProtKB-UniRule"/>
</dbReference>
<dbReference type="GO" id="GO:0005852">
    <property type="term" value="C:eukaryotic translation initiation factor 3 complex"/>
    <property type="evidence" value="ECO:0007669"/>
    <property type="project" value="UniProtKB-UniRule"/>
</dbReference>
<dbReference type="GO" id="GO:0003723">
    <property type="term" value="F:RNA binding"/>
    <property type="evidence" value="ECO:0007669"/>
    <property type="project" value="UniProtKB-UniRule"/>
</dbReference>
<dbReference type="GO" id="GO:0003743">
    <property type="term" value="F:translation initiation factor activity"/>
    <property type="evidence" value="ECO:0007669"/>
    <property type="project" value="UniProtKB-UniRule"/>
</dbReference>
<dbReference type="GO" id="GO:0001732">
    <property type="term" value="P:formation of cytoplasmic translation initiation complex"/>
    <property type="evidence" value="ECO:0007669"/>
    <property type="project" value="UniProtKB-UniRule"/>
</dbReference>
<dbReference type="CDD" id="cd12933">
    <property type="entry name" value="eIF3G"/>
    <property type="match status" value="1"/>
</dbReference>
<dbReference type="CDD" id="cd12408">
    <property type="entry name" value="RRM_eIF3G_like"/>
    <property type="match status" value="1"/>
</dbReference>
<dbReference type="Gene3D" id="3.30.70.330">
    <property type="match status" value="1"/>
</dbReference>
<dbReference type="HAMAP" id="MF_03006">
    <property type="entry name" value="eIF3g"/>
    <property type="match status" value="1"/>
</dbReference>
<dbReference type="InterPro" id="IPR017334">
    <property type="entry name" value="eIF3_g"/>
</dbReference>
<dbReference type="InterPro" id="IPR024675">
    <property type="entry name" value="eIF3g_N"/>
</dbReference>
<dbReference type="InterPro" id="IPR034240">
    <property type="entry name" value="eIF3G_RRM"/>
</dbReference>
<dbReference type="InterPro" id="IPR012677">
    <property type="entry name" value="Nucleotide-bd_a/b_plait_sf"/>
</dbReference>
<dbReference type="InterPro" id="IPR035979">
    <property type="entry name" value="RBD_domain_sf"/>
</dbReference>
<dbReference type="InterPro" id="IPR000504">
    <property type="entry name" value="RRM_dom"/>
</dbReference>
<dbReference type="PANTHER" id="PTHR10352">
    <property type="entry name" value="EUKARYOTIC TRANSLATION INITIATION FACTOR 3 SUBUNIT G"/>
    <property type="match status" value="1"/>
</dbReference>
<dbReference type="Pfam" id="PF12353">
    <property type="entry name" value="eIF3g"/>
    <property type="match status" value="1"/>
</dbReference>
<dbReference type="Pfam" id="PF00076">
    <property type="entry name" value="RRM_1"/>
    <property type="match status" value="1"/>
</dbReference>
<dbReference type="PIRSF" id="PIRSF037949">
    <property type="entry name" value="Transl_init_eIF-3_RNA-bind"/>
    <property type="match status" value="1"/>
</dbReference>
<dbReference type="SMART" id="SM00360">
    <property type="entry name" value="RRM"/>
    <property type="match status" value="1"/>
</dbReference>
<dbReference type="SUPFAM" id="SSF54928">
    <property type="entry name" value="RNA-binding domain, RBD"/>
    <property type="match status" value="1"/>
</dbReference>
<dbReference type="PROSITE" id="PS50102">
    <property type="entry name" value="RRM"/>
    <property type="match status" value="1"/>
</dbReference>
<organism>
    <name type="scientific">Brugia malayi</name>
    <name type="common">Filarial nematode worm</name>
    <dbReference type="NCBI Taxonomy" id="6279"/>
    <lineage>
        <taxon>Eukaryota</taxon>
        <taxon>Metazoa</taxon>
        <taxon>Ecdysozoa</taxon>
        <taxon>Nematoda</taxon>
        <taxon>Chromadorea</taxon>
        <taxon>Rhabditida</taxon>
        <taxon>Spirurina</taxon>
        <taxon>Spiruromorpha</taxon>
        <taxon>Filarioidea</taxon>
        <taxon>Onchocercidae</taxon>
        <taxon>Brugia</taxon>
    </lineage>
</organism>
<comment type="function">
    <text evidence="1">RNA-binding component of the eukaryotic translation initiation factor 3 (eIF-3) complex, which is involved in protein synthesis of a specialized repertoire of mRNAs and, together with other initiation factors, stimulates binding of mRNA and methionyl-tRNAi to the 40S ribosome. The eIF-3 complex specifically targets and initiates translation of a subset of mRNAs involved in cell proliferation. This subunit can bind 18S rRNA.</text>
</comment>
<comment type="subunit">
    <text evidence="1">Component of the eukaryotic translation initiation factor 3 (eIF-3) complex.</text>
</comment>
<comment type="subcellular location">
    <subcellularLocation>
        <location evidence="1">Cytoplasm</location>
    </subcellularLocation>
</comment>
<comment type="similarity">
    <text evidence="1">Belongs to the eIF-3 subunit G family.</text>
</comment>
<gene>
    <name type="ORF">Bm1_08615</name>
</gene>
<feature type="chain" id="PRO_0000365402" description="Eukaryotic translation initiation factor 3 subunit G">
    <location>
        <begin position="1"/>
        <end position="287"/>
    </location>
</feature>
<feature type="domain" description="RRM" evidence="1">
    <location>
        <begin position="208"/>
        <end position="286"/>
    </location>
</feature>
<feature type="region of interest" description="Disordered" evidence="2">
    <location>
        <begin position="163"/>
        <end position="207"/>
    </location>
</feature>
<accession>A8NS61</accession>
<proteinExistence type="inferred from homology"/>
<name>EIF3G_BRUMA</name>
<reference key="1">
    <citation type="journal article" date="2007" name="Science">
        <title>Draft genome of the filarial nematode parasite Brugia malayi.</title>
        <authorList>
            <person name="Ghedin E."/>
            <person name="Wang S."/>
            <person name="Spiro D."/>
            <person name="Caler E."/>
            <person name="Zhao Q."/>
            <person name="Crabtree J."/>
            <person name="Allen J.E."/>
            <person name="Delcher A.L."/>
            <person name="Guiliano D.B."/>
            <person name="Miranda-Saavedra D."/>
            <person name="Angiuoli S.V."/>
            <person name="Creasy T."/>
            <person name="Amedeo P."/>
            <person name="Haas B."/>
            <person name="El-Sayed N.M."/>
            <person name="Wortman J.R."/>
            <person name="Feldblyum T."/>
            <person name="Tallon L."/>
            <person name="Schatz M."/>
            <person name="Shumway M."/>
            <person name="Koo H."/>
            <person name="Salzberg S.L."/>
            <person name="Schobel S."/>
            <person name="Pertea M."/>
            <person name="Pop M."/>
            <person name="White O."/>
            <person name="Barton G.J."/>
            <person name="Carlow C.K.S."/>
            <person name="Crawford M.J."/>
            <person name="Daub J."/>
            <person name="Dimmic M.W."/>
            <person name="Estes C.F."/>
            <person name="Foster J.M."/>
            <person name="Ganatra M."/>
            <person name="Gregory W.F."/>
            <person name="Johnson N.M."/>
            <person name="Jin J."/>
            <person name="Komuniecki R."/>
            <person name="Korf I."/>
            <person name="Kumar S."/>
            <person name="Laney S."/>
            <person name="Li B.-W."/>
            <person name="Li W."/>
            <person name="Lindblom T.H."/>
            <person name="Lustigman S."/>
            <person name="Ma D."/>
            <person name="Maina C.V."/>
            <person name="Martin D.M."/>
            <person name="McCarter J.P."/>
            <person name="McReynolds L."/>
            <person name="Mitreva M."/>
            <person name="Nutman T.B."/>
            <person name="Parkinson J."/>
            <person name="Peregrin-Alvarez J.M."/>
            <person name="Poole C."/>
            <person name="Ren Q."/>
            <person name="Saunders L."/>
            <person name="Sluder A.E."/>
            <person name="Smith K."/>
            <person name="Stanke M."/>
            <person name="Unnasch T.R."/>
            <person name="Ware J."/>
            <person name="Wei A.D."/>
            <person name="Weil G."/>
            <person name="Williams D.J."/>
            <person name="Zhang Y."/>
            <person name="Williams S.A."/>
            <person name="Fraser-Liggett C."/>
            <person name="Slatko B."/>
            <person name="Blaxter M.L."/>
            <person name="Scott A.L."/>
        </authorList>
    </citation>
    <scope>NUCLEOTIDE SEQUENCE [LARGE SCALE GENOMIC DNA]</scope>
</reference>
<sequence length="287" mass="31669">MAVTTASTAPPLPNLSSISAIGSWAEAVEQETLGGAHESTKDGIKIVTDIISDDTGKYKVVTTFKVVTKKVSRPIAERKKWKKFGQCKNDGPGPHVSTTYVAEEVLMQFIRNRAGEQQLDIGDEGTKVATTTGGSFTHCRYCKSDEHWSVSCPYKSMYAKDDEEDLESKEKDTKLGPTVPGSGKYVAPGMRGDRPAVTGGAERRSEENTCRVTNLPEECDEMELRALFGTVGTVNRVFIAKDKHTNKPKGFAFVTFEHRSQTEAAIQKLNGYKLDHLVLKVEWTRFV</sequence>
<keyword id="KW-0963">Cytoplasm</keyword>
<keyword id="KW-0396">Initiation factor</keyword>
<keyword id="KW-0648">Protein biosynthesis</keyword>
<keyword id="KW-1185">Reference proteome</keyword>
<keyword id="KW-0694">RNA-binding</keyword>
<protein>
    <recommendedName>
        <fullName evidence="1">Eukaryotic translation initiation factor 3 subunit G</fullName>
        <shortName evidence="1">eIF3g</shortName>
    </recommendedName>
    <alternativeName>
        <fullName evidence="1">Eukaryotic translation initiation factor 3 RNA-binding subunit</fullName>
        <shortName evidence="1">eIF-3 RNA-binding subunit</shortName>
    </alternativeName>
    <alternativeName>
        <fullName evidence="1">Eukaryotic translation initiation factor 3 subunit 4</fullName>
    </alternativeName>
</protein>
<evidence type="ECO:0000255" key="1">
    <source>
        <dbReference type="HAMAP-Rule" id="MF_03006"/>
    </source>
</evidence>
<evidence type="ECO:0000256" key="2">
    <source>
        <dbReference type="SAM" id="MobiDB-lite"/>
    </source>
</evidence>